<name>CYB_AKOBO</name>
<evidence type="ECO:0000250" key="1"/>
<evidence type="ECO:0000250" key="2">
    <source>
        <dbReference type="UniProtKB" id="P00157"/>
    </source>
</evidence>
<evidence type="ECO:0000255" key="3">
    <source>
        <dbReference type="PROSITE-ProRule" id="PRU00967"/>
    </source>
</evidence>
<evidence type="ECO:0000255" key="4">
    <source>
        <dbReference type="PROSITE-ProRule" id="PRU00968"/>
    </source>
</evidence>
<keyword id="KW-0249">Electron transport</keyword>
<keyword id="KW-0349">Heme</keyword>
<keyword id="KW-0408">Iron</keyword>
<keyword id="KW-0472">Membrane</keyword>
<keyword id="KW-0479">Metal-binding</keyword>
<keyword id="KW-0496">Mitochondrion</keyword>
<keyword id="KW-0999">Mitochondrion inner membrane</keyword>
<keyword id="KW-0679">Respiratory chain</keyword>
<keyword id="KW-0812">Transmembrane</keyword>
<keyword id="KW-1133">Transmembrane helix</keyword>
<keyword id="KW-0813">Transport</keyword>
<keyword id="KW-0830">Ubiquinone</keyword>
<gene>
    <name type="primary">MT-CYB</name>
    <name type="synonym">COB</name>
    <name type="synonym">CYTB</name>
    <name type="synonym">MTCYB</name>
</gene>
<protein>
    <recommendedName>
        <fullName>Cytochrome b</fullName>
    </recommendedName>
    <alternativeName>
        <fullName>Complex III subunit 3</fullName>
    </alternativeName>
    <alternativeName>
        <fullName>Complex III subunit III</fullName>
    </alternativeName>
    <alternativeName>
        <fullName>Cytochrome b-c1 complex subunit 3</fullName>
    </alternativeName>
    <alternativeName>
        <fullName>Ubiquinol-cytochrome-c reductase complex cytochrome b subunit</fullName>
    </alternativeName>
</protein>
<dbReference type="EMBL" id="M35691">
    <property type="protein sequence ID" value="AAA16976.2"/>
    <property type="molecule type" value="Genomic_DNA"/>
</dbReference>
<dbReference type="EMBL" id="M35692">
    <property type="protein sequence ID" value="AAA31621.1"/>
    <property type="molecule type" value="Genomic_DNA"/>
</dbReference>
<dbReference type="PIR" id="A23725">
    <property type="entry name" value="A23725"/>
</dbReference>
<dbReference type="GO" id="GO:0005743">
    <property type="term" value="C:mitochondrial inner membrane"/>
    <property type="evidence" value="ECO:0007669"/>
    <property type="project" value="UniProtKB-SubCell"/>
</dbReference>
<dbReference type="GO" id="GO:0045275">
    <property type="term" value="C:respiratory chain complex III"/>
    <property type="evidence" value="ECO:0007669"/>
    <property type="project" value="InterPro"/>
</dbReference>
<dbReference type="GO" id="GO:0046872">
    <property type="term" value="F:metal ion binding"/>
    <property type="evidence" value="ECO:0007669"/>
    <property type="project" value="UniProtKB-KW"/>
</dbReference>
<dbReference type="GO" id="GO:0008121">
    <property type="term" value="F:ubiquinol-cytochrome-c reductase activity"/>
    <property type="evidence" value="ECO:0007669"/>
    <property type="project" value="InterPro"/>
</dbReference>
<dbReference type="GO" id="GO:0006122">
    <property type="term" value="P:mitochondrial electron transport, ubiquinol to cytochrome c"/>
    <property type="evidence" value="ECO:0007669"/>
    <property type="project" value="TreeGrafter"/>
</dbReference>
<dbReference type="CDD" id="cd00290">
    <property type="entry name" value="cytochrome_b_C"/>
    <property type="match status" value="1"/>
</dbReference>
<dbReference type="CDD" id="cd00284">
    <property type="entry name" value="Cytochrome_b_N"/>
    <property type="match status" value="1"/>
</dbReference>
<dbReference type="FunFam" id="1.20.810.10:FF:000002">
    <property type="entry name" value="Cytochrome b"/>
    <property type="match status" value="1"/>
</dbReference>
<dbReference type="Gene3D" id="1.20.810.10">
    <property type="entry name" value="Cytochrome Bc1 Complex, Chain C"/>
    <property type="match status" value="1"/>
</dbReference>
<dbReference type="InterPro" id="IPR005798">
    <property type="entry name" value="Cyt_b/b6_C"/>
</dbReference>
<dbReference type="InterPro" id="IPR036150">
    <property type="entry name" value="Cyt_b/b6_C_sf"/>
</dbReference>
<dbReference type="InterPro" id="IPR005797">
    <property type="entry name" value="Cyt_b/b6_N"/>
</dbReference>
<dbReference type="InterPro" id="IPR027387">
    <property type="entry name" value="Cytb/b6-like_sf"/>
</dbReference>
<dbReference type="InterPro" id="IPR030689">
    <property type="entry name" value="Cytochrome_b"/>
</dbReference>
<dbReference type="InterPro" id="IPR048260">
    <property type="entry name" value="Cytochrome_b_C_euk/bac"/>
</dbReference>
<dbReference type="InterPro" id="IPR048259">
    <property type="entry name" value="Cytochrome_b_N_euk/bac"/>
</dbReference>
<dbReference type="InterPro" id="IPR016174">
    <property type="entry name" value="Di-haem_cyt_TM"/>
</dbReference>
<dbReference type="PANTHER" id="PTHR19271">
    <property type="entry name" value="CYTOCHROME B"/>
    <property type="match status" value="1"/>
</dbReference>
<dbReference type="PANTHER" id="PTHR19271:SF16">
    <property type="entry name" value="CYTOCHROME B"/>
    <property type="match status" value="1"/>
</dbReference>
<dbReference type="Pfam" id="PF00032">
    <property type="entry name" value="Cytochrom_B_C"/>
    <property type="match status" value="1"/>
</dbReference>
<dbReference type="Pfam" id="PF00033">
    <property type="entry name" value="Cytochrome_B"/>
    <property type="match status" value="1"/>
</dbReference>
<dbReference type="PIRSF" id="PIRSF038885">
    <property type="entry name" value="COB"/>
    <property type="match status" value="1"/>
</dbReference>
<dbReference type="SUPFAM" id="SSF81648">
    <property type="entry name" value="a domain/subunit of cytochrome bc1 complex (Ubiquinol-cytochrome c reductase)"/>
    <property type="match status" value="1"/>
</dbReference>
<dbReference type="SUPFAM" id="SSF81342">
    <property type="entry name" value="Transmembrane di-heme cytochromes"/>
    <property type="match status" value="1"/>
</dbReference>
<dbReference type="PROSITE" id="PS51003">
    <property type="entry name" value="CYTB_CTER"/>
    <property type="match status" value="1"/>
</dbReference>
<dbReference type="PROSITE" id="PS51002">
    <property type="entry name" value="CYTB_NTER"/>
    <property type="match status" value="1"/>
</dbReference>
<accession>P21714</accession>
<sequence>MKILRKNHPLLKIVNHSFIDLPTPSNISSWWNFGSLLGMCLMIQILTGLFLAMHYTSDTTTAFSSVAHICRDVNYGWLIRYLHANGASMFFICLFIHVGRGIYYGSYTLSETWNIGIILFLTTMATAFVGYVLPWGQMSFWGATVITNLLSAIPYIGNTLVEWIWGGFSVDKATLTRFFAFHFILPFIITAFALVHLLFLHETGSNNPSGLNSDSDKIPFHPYYTTKDLLGIFLLLLVLMILALFFPDILGDPDNFTPANPLNTPAHIKPEWYFLFAYAILRSIPNKLGGVLALVLSILILAAFPLLNTSKQHGLIFRPITQVIYWIFIXNLLVLTWIGGQPVEYPXTMIGQIASITYFAIIIILIPVSNTIENNIIKL</sequence>
<reference key="1">
    <citation type="submission" date="1999-07" db="EMBL/GenBank/DDBJ databases">
        <authorList>
            <person name="Smith M.F."/>
        </authorList>
    </citation>
    <scope>NUCLEOTIDE SEQUENCE [GENOMIC DNA]</scope>
    <source>
        <tissue>Liver</tissue>
    </source>
</reference>
<reference key="2">
    <citation type="journal article" date="1993" name="Biol. J. Linn. Soc. Lond.">
        <title>The diversification of South American murid rodents: evidence from mitochondrial DNA sequence data for the akodontine tribe.</title>
        <authorList>
            <person name="Smith M.F."/>
            <person name="Patton J.L."/>
        </authorList>
    </citation>
    <scope>NUCLEOTIDE SEQUENCE [GENOMIC DNA] OF 1-267</scope>
    <source>
        <tissue>Liver</tissue>
    </source>
</reference>
<reference key="3">
    <citation type="journal article" date="1991" name="Mol. Biol. Evol.">
        <title>Variation in mitochondrial cytochrome b sequence in natural populations of South American akodontine rodents (Muridae: Sigmodontinae).</title>
        <authorList>
            <person name="Smith M.F."/>
            <person name="Patton J.L."/>
        </authorList>
    </citation>
    <scope>NUCLEOTIDE SEQUENCE [GENOMIC DNA] OF 1-133</scope>
    <source>
        <strain>Isolate MVZ 171607</strain>
        <strain>Isolate MVZ 171608</strain>
        <tissue>Liver</tissue>
    </source>
</reference>
<feature type="chain" id="PRO_0000060541" description="Cytochrome b">
    <location>
        <begin position="1"/>
        <end position="379"/>
    </location>
</feature>
<feature type="transmembrane region" description="Helical" evidence="2">
    <location>
        <begin position="33"/>
        <end position="53"/>
    </location>
</feature>
<feature type="transmembrane region" description="Helical" evidence="2">
    <location>
        <begin position="77"/>
        <end position="98"/>
    </location>
</feature>
<feature type="transmembrane region" description="Helical" evidence="2">
    <location>
        <begin position="113"/>
        <end position="133"/>
    </location>
</feature>
<feature type="transmembrane region" description="Helical" evidence="2">
    <location>
        <begin position="178"/>
        <end position="198"/>
    </location>
</feature>
<feature type="transmembrane region" description="Helical" evidence="2">
    <location>
        <begin position="226"/>
        <end position="246"/>
    </location>
</feature>
<feature type="transmembrane region" description="Helical" evidence="2">
    <location>
        <begin position="288"/>
        <end position="308"/>
    </location>
</feature>
<feature type="transmembrane region" description="Helical" evidence="2">
    <location>
        <begin position="320"/>
        <end position="340"/>
    </location>
</feature>
<feature type="transmembrane region" description="Helical" evidence="2">
    <location>
        <begin position="347"/>
        <end position="367"/>
    </location>
</feature>
<feature type="binding site" description="axial binding residue" evidence="2">
    <location>
        <position position="83"/>
    </location>
    <ligand>
        <name>heme b</name>
        <dbReference type="ChEBI" id="CHEBI:60344"/>
        <label>b562</label>
    </ligand>
    <ligandPart>
        <name>Fe</name>
        <dbReference type="ChEBI" id="CHEBI:18248"/>
    </ligandPart>
</feature>
<feature type="binding site" description="axial binding residue" evidence="2">
    <location>
        <position position="97"/>
    </location>
    <ligand>
        <name>heme b</name>
        <dbReference type="ChEBI" id="CHEBI:60344"/>
        <label>b566</label>
    </ligand>
    <ligandPart>
        <name>Fe</name>
        <dbReference type="ChEBI" id="CHEBI:18248"/>
    </ligandPart>
</feature>
<feature type="binding site" description="axial binding residue" evidence="2">
    <location>
        <position position="182"/>
    </location>
    <ligand>
        <name>heme b</name>
        <dbReference type="ChEBI" id="CHEBI:60344"/>
        <label>b562</label>
    </ligand>
    <ligandPart>
        <name>Fe</name>
        <dbReference type="ChEBI" id="CHEBI:18248"/>
    </ligandPart>
</feature>
<feature type="binding site" description="axial binding residue" evidence="2">
    <location>
        <position position="196"/>
    </location>
    <ligand>
        <name>heme b</name>
        <dbReference type="ChEBI" id="CHEBI:60344"/>
        <label>b566</label>
    </ligand>
    <ligandPart>
        <name>Fe</name>
        <dbReference type="ChEBI" id="CHEBI:18248"/>
    </ligandPart>
</feature>
<feature type="binding site" evidence="2">
    <location>
        <position position="201"/>
    </location>
    <ligand>
        <name>a ubiquinone</name>
        <dbReference type="ChEBI" id="CHEBI:16389"/>
    </ligand>
</feature>
<proteinExistence type="inferred from homology"/>
<comment type="function">
    <text evidence="2">Component of the ubiquinol-cytochrome c reductase complex (complex III or cytochrome b-c1 complex) that is part of the mitochondrial respiratory chain. The b-c1 complex mediates electron transfer from ubiquinol to cytochrome c. Contributes to the generation of a proton gradient across the mitochondrial membrane that is then used for ATP synthesis.</text>
</comment>
<comment type="cofactor">
    <cofactor evidence="2">
        <name>heme b</name>
        <dbReference type="ChEBI" id="CHEBI:60344"/>
    </cofactor>
    <text evidence="2">Binds 2 heme b groups non-covalently.</text>
</comment>
<comment type="subunit">
    <text evidence="2">The cytochrome bc1 complex contains 11 subunits: 3 respiratory subunits (MT-CYB, CYC1 and UQCRFS1), 2 core proteins (UQCRC1 and UQCRC2) and 6 low-molecular weight proteins (UQCRH/QCR6, UQCRB/QCR7, UQCRQ/QCR8, UQCR10/QCR9, UQCR11/QCR10 and a cleavage product of UQCRFS1). This cytochrome bc1 complex then forms a dimer.</text>
</comment>
<comment type="subcellular location">
    <subcellularLocation>
        <location evidence="2">Mitochondrion inner membrane</location>
        <topology evidence="2">Multi-pass membrane protein</topology>
    </subcellularLocation>
</comment>
<comment type="miscellaneous">
    <text evidence="1">Heme 1 (or BL or b562) is low-potential and absorbs at about 562 nm, and heme 2 (or BH or b566) is high-potential and absorbs at about 566 nm.</text>
</comment>
<comment type="similarity">
    <text evidence="3 4">Belongs to the cytochrome b family.</text>
</comment>
<comment type="caution">
    <text evidence="2">The full-length protein contains only eight transmembrane helices, not nine as predicted by bioinformatics tools.</text>
</comment>
<geneLocation type="mitochondrion"/>
<organism>
    <name type="scientific">Akodon boliviensis</name>
    <name type="common">Bolivian grass mouse</name>
    <dbReference type="NCBI Taxonomy" id="10072"/>
    <lineage>
        <taxon>Eukaryota</taxon>
        <taxon>Metazoa</taxon>
        <taxon>Chordata</taxon>
        <taxon>Craniata</taxon>
        <taxon>Vertebrata</taxon>
        <taxon>Euteleostomi</taxon>
        <taxon>Mammalia</taxon>
        <taxon>Eutheria</taxon>
        <taxon>Euarchontoglires</taxon>
        <taxon>Glires</taxon>
        <taxon>Rodentia</taxon>
        <taxon>Myomorpha</taxon>
        <taxon>Muroidea</taxon>
        <taxon>Cricetidae</taxon>
        <taxon>Sigmodontinae</taxon>
        <taxon>Akodon</taxon>
    </lineage>
</organism>